<proteinExistence type="inferred from homology"/>
<reference key="1">
    <citation type="journal article" date="2011" name="MBio">
        <title>Novel metabolic attributes of the genus Cyanothece, comprising a group of unicellular nitrogen-fixing Cyanobacteria.</title>
        <authorList>
            <person name="Bandyopadhyay A."/>
            <person name="Elvitigala T."/>
            <person name="Welsh E."/>
            <person name="Stockel J."/>
            <person name="Liberton M."/>
            <person name="Min H."/>
            <person name="Sherman L.A."/>
            <person name="Pakrasi H.B."/>
        </authorList>
    </citation>
    <scope>NUCLEOTIDE SEQUENCE [LARGE SCALE GENOMIC DNA]</scope>
    <source>
        <strain>PCC 7424</strain>
    </source>
</reference>
<comment type="function">
    <text evidence="1">Specifically catalyzes the cleavage of the D-lactyl ether substituent of MurNAc 6-phosphate, producing GlcNAc 6-phosphate and D-lactate.</text>
</comment>
<comment type="catalytic activity">
    <reaction evidence="1">
        <text>N-acetyl-D-muramate 6-phosphate + H2O = N-acetyl-D-glucosamine 6-phosphate + (R)-lactate</text>
        <dbReference type="Rhea" id="RHEA:26410"/>
        <dbReference type="ChEBI" id="CHEBI:15377"/>
        <dbReference type="ChEBI" id="CHEBI:16004"/>
        <dbReference type="ChEBI" id="CHEBI:57513"/>
        <dbReference type="ChEBI" id="CHEBI:58722"/>
        <dbReference type="EC" id="4.2.1.126"/>
    </reaction>
</comment>
<comment type="pathway">
    <text evidence="1">Amino-sugar metabolism; N-acetylmuramate degradation.</text>
</comment>
<comment type="subunit">
    <text evidence="1">Homodimer.</text>
</comment>
<comment type="miscellaneous">
    <text evidence="1">A lyase-type mechanism (elimination/hydration) is suggested for the cleavage of the lactyl ether bond of MurNAc 6-phosphate, with the formation of an alpha,beta-unsaturated aldehyde intermediate with (E)-stereochemistry, followed by the syn addition of water to give product.</text>
</comment>
<comment type="similarity">
    <text evidence="1">Belongs to the GCKR-like family. MurNAc-6-P etherase subfamily.</text>
</comment>
<organism>
    <name type="scientific">Gloeothece citriformis (strain PCC 7424)</name>
    <name type="common">Cyanothece sp. (strain PCC 7424)</name>
    <dbReference type="NCBI Taxonomy" id="65393"/>
    <lineage>
        <taxon>Bacteria</taxon>
        <taxon>Bacillati</taxon>
        <taxon>Cyanobacteriota</taxon>
        <taxon>Cyanophyceae</taxon>
        <taxon>Oscillatoriophycideae</taxon>
        <taxon>Chroococcales</taxon>
        <taxon>Aphanothecaceae</taxon>
        <taxon>Gloeothece</taxon>
        <taxon>Gloeothece citriformis</taxon>
    </lineage>
</organism>
<feature type="chain" id="PRO_1000116990" description="N-acetylmuramic acid 6-phosphate etherase">
    <location>
        <begin position="1"/>
        <end position="306"/>
    </location>
</feature>
<feature type="domain" description="SIS" evidence="1">
    <location>
        <begin position="59"/>
        <end position="222"/>
    </location>
</feature>
<feature type="active site" description="Proton donor" evidence="1">
    <location>
        <position position="87"/>
    </location>
</feature>
<feature type="active site" evidence="1">
    <location>
        <position position="118"/>
    </location>
</feature>
<accession>B7KFK5</accession>
<dbReference type="EC" id="4.2.1.126" evidence="1"/>
<dbReference type="EMBL" id="CP001291">
    <property type="protein sequence ID" value="ACK73330.1"/>
    <property type="molecule type" value="Genomic_DNA"/>
</dbReference>
<dbReference type="RefSeq" id="WP_015956911.1">
    <property type="nucleotide sequence ID" value="NC_011729.1"/>
</dbReference>
<dbReference type="SMR" id="B7KFK5"/>
<dbReference type="STRING" id="65393.PCC7424_4977"/>
<dbReference type="KEGG" id="cyc:PCC7424_4977"/>
<dbReference type="eggNOG" id="COG2103">
    <property type="taxonomic scope" value="Bacteria"/>
</dbReference>
<dbReference type="HOGENOM" id="CLU_049049_1_1_3"/>
<dbReference type="OrthoDB" id="9813395at2"/>
<dbReference type="UniPathway" id="UPA00342"/>
<dbReference type="Proteomes" id="UP000002384">
    <property type="component" value="Chromosome"/>
</dbReference>
<dbReference type="GO" id="GO:0097367">
    <property type="term" value="F:carbohydrate derivative binding"/>
    <property type="evidence" value="ECO:0007669"/>
    <property type="project" value="InterPro"/>
</dbReference>
<dbReference type="GO" id="GO:0016835">
    <property type="term" value="F:carbon-oxygen lyase activity"/>
    <property type="evidence" value="ECO:0007669"/>
    <property type="project" value="UniProtKB-UniRule"/>
</dbReference>
<dbReference type="GO" id="GO:0016803">
    <property type="term" value="F:ether hydrolase activity"/>
    <property type="evidence" value="ECO:0007669"/>
    <property type="project" value="TreeGrafter"/>
</dbReference>
<dbReference type="GO" id="GO:0046348">
    <property type="term" value="P:amino sugar catabolic process"/>
    <property type="evidence" value="ECO:0007669"/>
    <property type="project" value="InterPro"/>
</dbReference>
<dbReference type="GO" id="GO:0097173">
    <property type="term" value="P:N-acetylmuramic acid catabolic process"/>
    <property type="evidence" value="ECO:0007669"/>
    <property type="project" value="UniProtKB-UniPathway"/>
</dbReference>
<dbReference type="GO" id="GO:0009254">
    <property type="term" value="P:peptidoglycan turnover"/>
    <property type="evidence" value="ECO:0007669"/>
    <property type="project" value="TreeGrafter"/>
</dbReference>
<dbReference type="CDD" id="cd05007">
    <property type="entry name" value="SIS_Etherase"/>
    <property type="match status" value="1"/>
</dbReference>
<dbReference type="FunFam" id="1.10.8.1080:FF:000001">
    <property type="entry name" value="N-acetylmuramic acid 6-phosphate etherase"/>
    <property type="match status" value="1"/>
</dbReference>
<dbReference type="FunFam" id="3.40.50.10490:FF:000014">
    <property type="entry name" value="N-acetylmuramic acid 6-phosphate etherase"/>
    <property type="match status" value="1"/>
</dbReference>
<dbReference type="Gene3D" id="1.10.8.1080">
    <property type="match status" value="1"/>
</dbReference>
<dbReference type="Gene3D" id="3.40.50.10490">
    <property type="entry name" value="Glucose-6-phosphate isomerase like protein, domain 1"/>
    <property type="match status" value="1"/>
</dbReference>
<dbReference type="HAMAP" id="MF_00068">
    <property type="entry name" value="MurQ"/>
    <property type="match status" value="1"/>
</dbReference>
<dbReference type="InterPro" id="IPR005488">
    <property type="entry name" value="Etherase_MurQ"/>
</dbReference>
<dbReference type="InterPro" id="IPR005486">
    <property type="entry name" value="Glucokinase_regulatory_CS"/>
</dbReference>
<dbReference type="InterPro" id="IPR040190">
    <property type="entry name" value="MURQ/GCKR"/>
</dbReference>
<dbReference type="InterPro" id="IPR001347">
    <property type="entry name" value="SIS_dom"/>
</dbReference>
<dbReference type="InterPro" id="IPR046348">
    <property type="entry name" value="SIS_dom_sf"/>
</dbReference>
<dbReference type="NCBIfam" id="TIGR00274">
    <property type="entry name" value="N-acetylmuramic acid 6-phosphate etherase"/>
    <property type="match status" value="1"/>
</dbReference>
<dbReference type="NCBIfam" id="NF003915">
    <property type="entry name" value="PRK05441.1"/>
    <property type="match status" value="1"/>
</dbReference>
<dbReference type="NCBIfam" id="NF009222">
    <property type="entry name" value="PRK12570.1"/>
    <property type="match status" value="1"/>
</dbReference>
<dbReference type="PANTHER" id="PTHR10088">
    <property type="entry name" value="GLUCOKINASE REGULATORY PROTEIN"/>
    <property type="match status" value="1"/>
</dbReference>
<dbReference type="PANTHER" id="PTHR10088:SF4">
    <property type="entry name" value="GLUCOKINASE REGULATORY PROTEIN"/>
    <property type="match status" value="1"/>
</dbReference>
<dbReference type="Pfam" id="PF20741">
    <property type="entry name" value="GKRP-like_C"/>
    <property type="match status" value="1"/>
</dbReference>
<dbReference type="Pfam" id="PF22645">
    <property type="entry name" value="GKRP_SIS_N"/>
    <property type="match status" value="1"/>
</dbReference>
<dbReference type="SUPFAM" id="SSF53697">
    <property type="entry name" value="SIS domain"/>
    <property type="match status" value="1"/>
</dbReference>
<dbReference type="PROSITE" id="PS01272">
    <property type="entry name" value="GCKR"/>
    <property type="match status" value="1"/>
</dbReference>
<dbReference type="PROSITE" id="PS51464">
    <property type="entry name" value="SIS"/>
    <property type="match status" value="1"/>
</dbReference>
<gene>
    <name evidence="1" type="primary">murQ</name>
    <name type="ordered locus">PCC7424_4977</name>
</gene>
<keyword id="KW-0119">Carbohydrate metabolism</keyword>
<keyword id="KW-0456">Lyase</keyword>
<keyword id="KW-1185">Reference proteome</keyword>
<sequence>MNNLEERGHLLTEQINPNSQNLDQLSSLELVELFNAEDAQTLKAIAGAKLELAKAIEVISEALRQGGRLFYVGAGTSGRLGVLDAAECPPTFCTPPEMVQGIIAGGAQALIRSSEDLEDKLEDGASIIAQREITPLDVVVGITAGGTTPFVHGALMAAKTRRATTIAISCVPVEQVSIEADIDIRLLTGPEILAGSTRLKAGTVTKMALNILSTGAMVQLGKVYGNRMIDVAVTNRKLHDRALRIIQDLTDLNRTEAGSLLERSGRQVKLALLMHSLGVDAETGAHLLATHHGNLRAALNSALLKD</sequence>
<evidence type="ECO:0000255" key="1">
    <source>
        <dbReference type="HAMAP-Rule" id="MF_00068"/>
    </source>
</evidence>
<protein>
    <recommendedName>
        <fullName evidence="1">N-acetylmuramic acid 6-phosphate etherase</fullName>
        <shortName evidence="1">MurNAc-6-P etherase</shortName>
        <ecNumber evidence="1">4.2.1.126</ecNumber>
    </recommendedName>
    <alternativeName>
        <fullName evidence="1">N-acetylmuramic acid 6-phosphate hydrolase</fullName>
    </alternativeName>
    <alternativeName>
        <fullName evidence="1">N-acetylmuramic acid 6-phosphate lyase</fullName>
    </alternativeName>
</protein>
<name>MURQ_GLOC7</name>